<feature type="chain" id="PRO_1000076973" description="Thymidylate kinase">
    <location>
        <begin position="1"/>
        <end position="229"/>
    </location>
</feature>
<feature type="binding site" evidence="1">
    <location>
        <begin position="9"/>
        <end position="16"/>
    </location>
    <ligand>
        <name>ATP</name>
        <dbReference type="ChEBI" id="CHEBI:30616"/>
    </ligand>
</feature>
<protein>
    <recommendedName>
        <fullName evidence="1">Thymidylate kinase</fullName>
        <ecNumber evidence="1">2.7.4.9</ecNumber>
    </recommendedName>
    <alternativeName>
        <fullName evidence="1">dTMP kinase</fullName>
    </alternativeName>
</protein>
<gene>
    <name evidence="1" type="primary">tmk</name>
    <name type="ordered locus">Rcas_3720</name>
</gene>
<proteinExistence type="inferred from homology"/>
<reference key="1">
    <citation type="submission" date="2007-08" db="EMBL/GenBank/DDBJ databases">
        <title>Complete sequence of Roseiflexus castenholzii DSM 13941.</title>
        <authorList>
            <consortium name="US DOE Joint Genome Institute"/>
            <person name="Copeland A."/>
            <person name="Lucas S."/>
            <person name="Lapidus A."/>
            <person name="Barry K."/>
            <person name="Glavina del Rio T."/>
            <person name="Dalin E."/>
            <person name="Tice H."/>
            <person name="Pitluck S."/>
            <person name="Thompson L.S."/>
            <person name="Brettin T."/>
            <person name="Bruce D."/>
            <person name="Detter J.C."/>
            <person name="Han C."/>
            <person name="Tapia R."/>
            <person name="Schmutz J."/>
            <person name="Larimer F."/>
            <person name="Land M."/>
            <person name="Hauser L."/>
            <person name="Kyrpides N."/>
            <person name="Mikhailova N."/>
            <person name="Bryant D.A."/>
            <person name="Hanada S."/>
            <person name="Tsukatani Y."/>
            <person name="Richardson P."/>
        </authorList>
    </citation>
    <scope>NUCLEOTIDE SEQUENCE [LARGE SCALE GENOMIC DNA]</scope>
    <source>
        <strain>DSM 13941 / HLO8</strain>
    </source>
</reference>
<name>KTHY_ROSCS</name>
<accession>A7NQB4</accession>
<organism>
    <name type="scientific">Roseiflexus castenholzii (strain DSM 13941 / HLO8)</name>
    <dbReference type="NCBI Taxonomy" id="383372"/>
    <lineage>
        <taxon>Bacteria</taxon>
        <taxon>Bacillati</taxon>
        <taxon>Chloroflexota</taxon>
        <taxon>Chloroflexia</taxon>
        <taxon>Chloroflexales</taxon>
        <taxon>Roseiflexineae</taxon>
        <taxon>Roseiflexaceae</taxon>
        <taxon>Roseiflexus</taxon>
    </lineage>
</organism>
<dbReference type="EC" id="2.7.4.9" evidence="1"/>
<dbReference type="EMBL" id="CP000804">
    <property type="protein sequence ID" value="ABU59760.1"/>
    <property type="molecule type" value="Genomic_DNA"/>
</dbReference>
<dbReference type="RefSeq" id="WP_012122183.1">
    <property type="nucleotide sequence ID" value="NC_009767.1"/>
</dbReference>
<dbReference type="SMR" id="A7NQB4"/>
<dbReference type="STRING" id="383372.Rcas_3720"/>
<dbReference type="KEGG" id="rca:Rcas_3720"/>
<dbReference type="eggNOG" id="COG0125">
    <property type="taxonomic scope" value="Bacteria"/>
</dbReference>
<dbReference type="HOGENOM" id="CLU_049131_0_2_0"/>
<dbReference type="OrthoDB" id="9774907at2"/>
<dbReference type="Proteomes" id="UP000000263">
    <property type="component" value="Chromosome"/>
</dbReference>
<dbReference type="GO" id="GO:0005829">
    <property type="term" value="C:cytosol"/>
    <property type="evidence" value="ECO:0007669"/>
    <property type="project" value="TreeGrafter"/>
</dbReference>
<dbReference type="GO" id="GO:0005524">
    <property type="term" value="F:ATP binding"/>
    <property type="evidence" value="ECO:0007669"/>
    <property type="project" value="UniProtKB-UniRule"/>
</dbReference>
<dbReference type="GO" id="GO:0004798">
    <property type="term" value="F:dTMP kinase activity"/>
    <property type="evidence" value="ECO:0007669"/>
    <property type="project" value="UniProtKB-UniRule"/>
</dbReference>
<dbReference type="GO" id="GO:0006233">
    <property type="term" value="P:dTDP biosynthetic process"/>
    <property type="evidence" value="ECO:0007669"/>
    <property type="project" value="InterPro"/>
</dbReference>
<dbReference type="GO" id="GO:0006235">
    <property type="term" value="P:dTTP biosynthetic process"/>
    <property type="evidence" value="ECO:0007669"/>
    <property type="project" value="UniProtKB-UniRule"/>
</dbReference>
<dbReference type="GO" id="GO:0006227">
    <property type="term" value="P:dUDP biosynthetic process"/>
    <property type="evidence" value="ECO:0007669"/>
    <property type="project" value="TreeGrafter"/>
</dbReference>
<dbReference type="CDD" id="cd01672">
    <property type="entry name" value="TMPK"/>
    <property type="match status" value="1"/>
</dbReference>
<dbReference type="FunFam" id="3.40.50.300:FF:000225">
    <property type="entry name" value="Thymidylate kinase"/>
    <property type="match status" value="1"/>
</dbReference>
<dbReference type="Gene3D" id="3.40.50.300">
    <property type="entry name" value="P-loop containing nucleotide triphosphate hydrolases"/>
    <property type="match status" value="1"/>
</dbReference>
<dbReference type="HAMAP" id="MF_00165">
    <property type="entry name" value="Thymidylate_kinase"/>
    <property type="match status" value="1"/>
</dbReference>
<dbReference type="InterPro" id="IPR027417">
    <property type="entry name" value="P-loop_NTPase"/>
</dbReference>
<dbReference type="InterPro" id="IPR039430">
    <property type="entry name" value="Thymidylate_kin-like_dom"/>
</dbReference>
<dbReference type="InterPro" id="IPR018095">
    <property type="entry name" value="Thymidylate_kin_CS"/>
</dbReference>
<dbReference type="InterPro" id="IPR018094">
    <property type="entry name" value="Thymidylate_kinase"/>
</dbReference>
<dbReference type="NCBIfam" id="TIGR00041">
    <property type="entry name" value="DTMP_kinase"/>
    <property type="match status" value="1"/>
</dbReference>
<dbReference type="PANTHER" id="PTHR10344">
    <property type="entry name" value="THYMIDYLATE KINASE"/>
    <property type="match status" value="1"/>
</dbReference>
<dbReference type="PANTHER" id="PTHR10344:SF4">
    <property type="entry name" value="UMP-CMP KINASE 2, MITOCHONDRIAL"/>
    <property type="match status" value="1"/>
</dbReference>
<dbReference type="Pfam" id="PF02223">
    <property type="entry name" value="Thymidylate_kin"/>
    <property type="match status" value="1"/>
</dbReference>
<dbReference type="SUPFAM" id="SSF52540">
    <property type="entry name" value="P-loop containing nucleoside triphosphate hydrolases"/>
    <property type="match status" value="1"/>
</dbReference>
<dbReference type="PROSITE" id="PS01331">
    <property type="entry name" value="THYMIDYLATE_KINASE"/>
    <property type="match status" value="1"/>
</dbReference>
<evidence type="ECO:0000255" key="1">
    <source>
        <dbReference type="HAMAP-Rule" id="MF_00165"/>
    </source>
</evidence>
<sequence>MSLFVTFEGPEGSGKSTQARLLYESLYARRYPVILTREPGGTRIGDLIRRIVLDLQHTEMAPTTETLLFSAARAQLVSEVIRPYLEQGGIVLCDRYADSTYAYQGYGLGRDLAELRTITAAATGGLRPDITFYLDISAEDGLERKRRKHPGARLMGQRGVDQEWNRLDARELEYHQRVEAGYRALIAQDPERWRVLDARQSIEALAEQIAAIVEPYLASIPQLEAVPYS</sequence>
<comment type="function">
    <text evidence="1">Phosphorylation of dTMP to form dTDP in both de novo and salvage pathways of dTTP synthesis.</text>
</comment>
<comment type="catalytic activity">
    <reaction evidence="1">
        <text>dTMP + ATP = dTDP + ADP</text>
        <dbReference type="Rhea" id="RHEA:13517"/>
        <dbReference type="ChEBI" id="CHEBI:30616"/>
        <dbReference type="ChEBI" id="CHEBI:58369"/>
        <dbReference type="ChEBI" id="CHEBI:63528"/>
        <dbReference type="ChEBI" id="CHEBI:456216"/>
        <dbReference type="EC" id="2.7.4.9"/>
    </reaction>
</comment>
<comment type="similarity">
    <text evidence="1">Belongs to the thymidylate kinase family.</text>
</comment>
<keyword id="KW-0067">ATP-binding</keyword>
<keyword id="KW-0418">Kinase</keyword>
<keyword id="KW-0545">Nucleotide biosynthesis</keyword>
<keyword id="KW-0547">Nucleotide-binding</keyword>
<keyword id="KW-1185">Reference proteome</keyword>
<keyword id="KW-0808">Transferase</keyword>